<name>FLBT_RHILW</name>
<dbReference type="EMBL" id="CP001191">
    <property type="protein sequence ID" value="ACI53641.1"/>
    <property type="molecule type" value="Genomic_DNA"/>
</dbReference>
<dbReference type="RefSeq" id="WP_003584285.1">
    <property type="nucleotide sequence ID" value="NC_011369.1"/>
</dbReference>
<dbReference type="STRING" id="395492.Rleg2_0342"/>
<dbReference type="KEGG" id="rlt:Rleg2_0342"/>
<dbReference type="eggNOG" id="COG5443">
    <property type="taxonomic scope" value="Bacteria"/>
</dbReference>
<dbReference type="HOGENOM" id="CLU_130913_1_0_5"/>
<dbReference type="Proteomes" id="UP000008330">
    <property type="component" value="Chromosome"/>
</dbReference>
<dbReference type="GO" id="GO:0048027">
    <property type="term" value="F:mRNA 5'-UTR binding"/>
    <property type="evidence" value="ECO:0007669"/>
    <property type="project" value="UniProtKB-UniRule"/>
</dbReference>
<dbReference type="GO" id="GO:0044781">
    <property type="term" value="P:bacterial-type flagellum organization"/>
    <property type="evidence" value="ECO:0007669"/>
    <property type="project" value="UniProtKB-KW"/>
</dbReference>
<dbReference type="GO" id="GO:0006402">
    <property type="term" value="P:mRNA catabolic process"/>
    <property type="evidence" value="ECO:0007669"/>
    <property type="project" value="InterPro"/>
</dbReference>
<dbReference type="GO" id="GO:1902209">
    <property type="term" value="P:negative regulation of bacterial-type flagellum assembly"/>
    <property type="evidence" value="ECO:0007669"/>
    <property type="project" value="UniProtKB-UniRule"/>
</dbReference>
<dbReference type="HAMAP" id="MF_00783">
    <property type="entry name" value="FlbT"/>
    <property type="match status" value="1"/>
</dbReference>
<dbReference type="InterPro" id="IPR009967">
    <property type="entry name" value="Flagellum_FlbT"/>
</dbReference>
<dbReference type="NCBIfam" id="NF001995">
    <property type="entry name" value="PRK00794.1-1"/>
    <property type="match status" value="1"/>
</dbReference>
<dbReference type="Pfam" id="PF07378">
    <property type="entry name" value="FlbT"/>
    <property type="match status" value="1"/>
</dbReference>
<dbReference type="PIRSF" id="PIRSF009533">
    <property type="entry name" value="FlbT"/>
    <property type="match status" value="1"/>
</dbReference>
<proteinExistence type="inferred from homology"/>
<gene>
    <name evidence="1" type="primary">flbT</name>
    <name type="ordered locus">Rleg2_0342</name>
</gene>
<sequence length="149" mass="17036">MKSTLRISLKAGERIFINGAVLRVDRKVALEFLNDVTFLLENHVLQPEGATTPLRQLYFIAQMILINPEGKDHSTAMFRKSITMLLSCFKNEEILAELKRIDALVSTGRAFDALKAIRGLYAIEDNILNNHEMPPTMVEQIRREIAPWR</sequence>
<organism>
    <name type="scientific">Rhizobium leguminosarum bv. trifolii (strain WSM2304)</name>
    <dbReference type="NCBI Taxonomy" id="395492"/>
    <lineage>
        <taxon>Bacteria</taxon>
        <taxon>Pseudomonadati</taxon>
        <taxon>Pseudomonadota</taxon>
        <taxon>Alphaproteobacteria</taxon>
        <taxon>Hyphomicrobiales</taxon>
        <taxon>Rhizobiaceae</taxon>
        <taxon>Rhizobium/Agrobacterium group</taxon>
        <taxon>Rhizobium</taxon>
    </lineage>
</organism>
<evidence type="ECO:0000255" key="1">
    <source>
        <dbReference type="HAMAP-Rule" id="MF_00783"/>
    </source>
</evidence>
<accession>B5ZQG0</accession>
<comment type="function">
    <text evidence="1">Has a post-transcriptional repressor function in flagellum biogenesis. Associates with the 5'-UTR of fljK mRNA and promotes its degradation.</text>
</comment>
<comment type="similarity">
    <text evidence="1">Belongs to the FlbT family.</text>
</comment>
<feature type="chain" id="PRO_1000133723" description="Probable flagellum biosynthesis repressor protein FlbT">
    <location>
        <begin position="1"/>
        <end position="149"/>
    </location>
</feature>
<keyword id="KW-1005">Bacterial flagellum biogenesis</keyword>
<keyword id="KW-1185">Reference proteome</keyword>
<keyword id="KW-0678">Repressor</keyword>
<keyword id="KW-0694">RNA-binding</keyword>
<reference key="1">
    <citation type="journal article" date="2010" name="Stand. Genomic Sci.">
        <title>Complete genome sequence of Rhizobium leguminosarum bv trifolii strain WSM2304, an effective microsymbiont of the South American clover Trifolium polymorphum.</title>
        <authorList>
            <person name="Reeve W."/>
            <person name="O'Hara G."/>
            <person name="Chain P."/>
            <person name="Ardley J."/>
            <person name="Brau L."/>
            <person name="Nandesena K."/>
            <person name="Tiwari R."/>
            <person name="Malfatti S."/>
            <person name="Kiss H."/>
            <person name="Lapidus A."/>
            <person name="Copeland A."/>
            <person name="Nolan M."/>
            <person name="Land M."/>
            <person name="Ivanova N."/>
            <person name="Mavromatis K."/>
            <person name="Markowitz V."/>
            <person name="Kyrpides N."/>
            <person name="Melino V."/>
            <person name="Denton M."/>
            <person name="Yates R."/>
            <person name="Howieson J."/>
        </authorList>
    </citation>
    <scope>NUCLEOTIDE SEQUENCE [LARGE SCALE GENOMIC DNA]</scope>
    <source>
        <strain>WSM2304</strain>
    </source>
</reference>
<protein>
    <recommendedName>
        <fullName evidence="1">Probable flagellum biosynthesis repressor protein FlbT</fullName>
    </recommendedName>
</protein>